<organism>
    <name type="scientific">Schizosaccharomyces pombe (strain 972 / ATCC 24843)</name>
    <name type="common">Fission yeast</name>
    <dbReference type="NCBI Taxonomy" id="284812"/>
    <lineage>
        <taxon>Eukaryota</taxon>
        <taxon>Fungi</taxon>
        <taxon>Dikarya</taxon>
        <taxon>Ascomycota</taxon>
        <taxon>Taphrinomycotina</taxon>
        <taxon>Schizosaccharomycetes</taxon>
        <taxon>Schizosaccharomycetales</taxon>
        <taxon>Schizosaccharomycetaceae</taxon>
        <taxon>Schizosaccharomyces</taxon>
    </lineage>
</organism>
<name>YAYG_SCHPO</name>
<accession>G2TRN0</accession>
<proteinExistence type="predicted"/>
<feature type="chain" id="PRO_0000416617" description="Uncharacterized protein C4H3.16">
    <location>
        <begin position="1"/>
        <end position="107"/>
    </location>
</feature>
<sequence>MKRCRSEHVPSRLPRKKCKNHLDMRSFLSLFASKKSNAHDASSIVLNEKVNFVTDNDHLPSSTGVCEFCDNVLYLSTCDRCQRNICRNCSTLMYFKENTVARCLDCL</sequence>
<keyword id="KW-1185">Reference proteome</keyword>
<dbReference type="EMBL" id="CU329670">
    <property type="protein sequence ID" value="CCD31332.1"/>
    <property type="molecule type" value="Genomic_DNA"/>
</dbReference>
<dbReference type="RefSeq" id="XP_004001787.1">
    <property type="nucleotide sequence ID" value="XM_004001738.1"/>
</dbReference>
<dbReference type="PaxDb" id="4896-SPAC4H3.16.1"/>
<dbReference type="EnsemblFungi" id="SPAC4H3.16.1">
    <property type="protein sequence ID" value="SPAC4H3.16.1:pep"/>
    <property type="gene ID" value="SPAC4H3.16"/>
</dbReference>
<dbReference type="PomBase" id="SPAC4H3.16"/>
<dbReference type="VEuPathDB" id="FungiDB:SPAC4H3.16"/>
<dbReference type="HOGENOM" id="CLU_2224730_0_0_1"/>
<dbReference type="InParanoid" id="G2TRN0"/>
<dbReference type="OMA" id="CDRCTRP"/>
<dbReference type="PRO" id="PR:G2TRN0"/>
<dbReference type="Proteomes" id="UP000002485">
    <property type="component" value="Chromosome I"/>
</dbReference>
<gene>
    <name type="ORF">SPAC4H3.16</name>
</gene>
<reference key="1">
    <citation type="journal article" date="2002" name="Nature">
        <title>The genome sequence of Schizosaccharomyces pombe.</title>
        <authorList>
            <person name="Wood V."/>
            <person name="Gwilliam R."/>
            <person name="Rajandream M.A."/>
            <person name="Lyne M.H."/>
            <person name="Lyne R."/>
            <person name="Stewart A."/>
            <person name="Sgouros J.G."/>
            <person name="Peat N."/>
            <person name="Hayles J."/>
            <person name="Baker S.G."/>
            <person name="Basham D."/>
            <person name="Bowman S."/>
            <person name="Brooks K."/>
            <person name="Brown D."/>
            <person name="Brown S."/>
            <person name="Chillingworth T."/>
            <person name="Churcher C.M."/>
            <person name="Collins M."/>
            <person name="Connor R."/>
            <person name="Cronin A."/>
            <person name="Davis P."/>
            <person name="Feltwell T."/>
            <person name="Fraser A."/>
            <person name="Gentles S."/>
            <person name="Goble A."/>
            <person name="Hamlin N."/>
            <person name="Harris D.E."/>
            <person name="Hidalgo J."/>
            <person name="Hodgson G."/>
            <person name="Holroyd S."/>
            <person name="Hornsby T."/>
            <person name="Howarth S."/>
            <person name="Huckle E.J."/>
            <person name="Hunt S."/>
            <person name="Jagels K."/>
            <person name="James K.D."/>
            <person name="Jones L."/>
            <person name="Jones M."/>
            <person name="Leather S."/>
            <person name="McDonald S."/>
            <person name="McLean J."/>
            <person name="Mooney P."/>
            <person name="Moule S."/>
            <person name="Mungall K.L."/>
            <person name="Murphy L.D."/>
            <person name="Niblett D."/>
            <person name="Odell C."/>
            <person name="Oliver K."/>
            <person name="O'Neil S."/>
            <person name="Pearson D."/>
            <person name="Quail M.A."/>
            <person name="Rabbinowitsch E."/>
            <person name="Rutherford K.M."/>
            <person name="Rutter S."/>
            <person name="Saunders D."/>
            <person name="Seeger K."/>
            <person name="Sharp S."/>
            <person name="Skelton J."/>
            <person name="Simmonds M.N."/>
            <person name="Squares R."/>
            <person name="Squares S."/>
            <person name="Stevens K."/>
            <person name="Taylor K."/>
            <person name="Taylor R.G."/>
            <person name="Tivey A."/>
            <person name="Walsh S.V."/>
            <person name="Warren T."/>
            <person name="Whitehead S."/>
            <person name="Woodward J.R."/>
            <person name="Volckaert G."/>
            <person name="Aert R."/>
            <person name="Robben J."/>
            <person name="Grymonprez B."/>
            <person name="Weltjens I."/>
            <person name="Vanstreels E."/>
            <person name="Rieger M."/>
            <person name="Schaefer M."/>
            <person name="Mueller-Auer S."/>
            <person name="Gabel C."/>
            <person name="Fuchs M."/>
            <person name="Duesterhoeft A."/>
            <person name="Fritzc C."/>
            <person name="Holzer E."/>
            <person name="Moestl D."/>
            <person name="Hilbert H."/>
            <person name="Borzym K."/>
            <person name="Langer I."/>
            <person name="Beck A."/>
            <person name="Lehrach H."/>
            <person name="Reinhardt R."/>
            <person name="Pohl T.M."/>
            <person name="Eger P."/>
            <person name="Zimmermann W."/>
            <person name="Wedler H."/>
            <person name="Wambutt R."/>
            <person name="Purnelle B."/>
            <person name="Goffeau A."/>
            <person name="Cadieu E."/>
            <person name="Dreano S."/>
            <person name="Gloux S."/>
            <person name="Lelaure V."/>
            <person name="Mottier S."/>
            <person name="Galibert F."/>
            <person name="Aves S.J."/>
            <person name="Xiang Z."/>
            <person name="Hunt C."/>
            <person name="Moore K."/>
            <person name="Hurst S.M."/>
            <person name="Lucas M."/>
            <person name="Rochet M."/>
            <person name="Gaillardin C."/>
            <person name="Tallada V.A."/>
            <person name="Garzon A."/>
            <person name="Thode G."/>
            <person name="Daga R.R."/>
            <person name="Cruzado L."/>
            <person name="Jimenez J."/>
            <person name="Sanchez M."/>
            <person name="del Rey F."/>
            <person name="Benito J."/>
            <person name="Dominguez A."/>
            <person name="Revuelta J.L."/>
            <person name="Moreno S."/>
            <person name="Armstrong J."/>
            <person name="Forsburg S.L."/>
            <person name="Cerutti L."/>
            <person name="Lowe T."/>
            <person name="McCombie W.R."/>
            <person name="Paulsen I."/>
            <person name="Potashkin J."/>
            <person name="Shpakovski G.V."/>
            <person name="Ussery D."/>
            <person name="Barrell B.G."/>
            <person name="Nurse P."/>
        </authorList>
    </citation>
    <scope>NUCLEOTIDE SEQUENCE [LARGE SCALE GENOMIC DNA]</scope>
    <source>
        <strain>972 / ATCC 24843</strain>
    </source>
</reference>
<reference key="2">
    <citation type="journal article" date="2011" name="Science">
        <title>Comparative functional genomics of the fission yeasts.</title>
        <authorList>
            <person name="Rhind N."/>
            <person name="Chen Z."/>
            <person name="Yassour M."/>
            <person name="Thompson D.A."/>
            <person name="Haas B.J."/>
            <person name="Habib N."/>
            <person name="Wapinski I."/>
            <person name="Roy S."/>
            <person name="Lin M.F."/>
            <person name="Heiman D.I."/>
            <person name="Young S.K."/>
            <person name="Furuya K."/>
            <person name="Guo Y."/>
            <person name="Pidoux A."/>
            <person name="Chen H.M."/>
            <person name="Robbertse B."/>
            <person name="Goldberg J.M."/>
            <person name="Aoki K."/>
            <person name="Bayne E.H."/>
            <person name="Berlin A.M."/>
            <person name="Desjardins C.A."/>
            <person name="Dobbs E."/>
            <person name="Dukaj L."/>
            <person name="Fan L."/>
            <person name="FitzGerald M.G."/>
            <person name="French C."/>
            <person name="Gujja S."/>
            <person name="Hansen K."/>
            <person name="Keifenheim D."/>
            <person name="Levin J.Z."/>
            <person name="Mosher R.A."/>
            <person name="Mueller C.A."/>
            <person name="Pfiffner J."/>
            <person name="Priest M."/>
            <person name="Russ C."/>
            <person name="Smialowska A."/>
            <person name="Swoboda P."/>
            <person name="Sykes S.M."/>
            <person name="Vaughn M."/>
            <person name="Vengrova S."/>
            <person name="Yoder R."/>
            <person name="Zeng Q."/>
            <person name="Allshire R."/>
            <person name="Baulcombe D."/>
            <person name="Birren B.W."/>
            <person name="Brown W."/>
            <person name="Ekwall K."/>
            <person name="Kellis M."/>
            <person name="Leatherwood J."/>
            <person name="Levin H."/>
            <person name="Margalit H."/>
            <person name="Martienssen R."/>
            <person name="Nieduszynski C.A."/>
            <person name="Spatafora J.W."/>
            <person name="Friedman N."/>
            <person name="Dalgaard J.Z."/>
            <person name="Baumann P."/>
            <person name="Niki H."/>
            <person name="Regev A."/>
            <person name="Nusbaum C."/>
        </authorList>
    </citation>
    <scope>IDENTIFICATION</scope>
</reference>
<protein>
    <recommendedName>
        <fullName>Uncharacterized protein C4H3.16</fullName>
    </recommendedName>
</protein>